<accession>C0Q1Q4</accession>
<dbReference type="EMBL" id="CP000857">
    <property type="protein sequence ID" value="ACN45840.1"/>
    <property type="molecule type" value="Genomic_DNA"/>
</dbReference>
<dbReference type="RefSeq" id="WP_000753216.1">
    <property type="nucleotide sequence ID" value="NC_012125.1"/>
</dbReference>
<dbReference type="KEGG" id="sei:SPC_1693"/>
<dbReference type="HOGENOM" id="CLU_136197_2_0_6"/>
<dbReference type="UniPathway" id="UPA00148"/>
<dbReference type="Proteomes" id="UP000001599">
    <property type="component" value="Chromosome"/>
</dbReference>
<dbReference type="GO" id="GO:0005886">
    <property type="term" value="C:plasma membrane"/>
    <property type="evidence" value="ECO:0007669"/>
    <property type="project" value="UniProtKB-SubCell"/>
</dbReference>
<dbReference type="GO" id="GO:0015087">
    <property type="term" value="F:cobalt ion transmembrane transporter activity"/>
    <property type="evidence" value="ECO:0007669"/>
    <property type="project" value="UniProtKB-UniRule"/>
</dbReference>
<dbReference type="GO" id="GO:0009236">
    <property type="term" value="P:cobalamin biosynthetic process"/>
    <property type="evidence" value="ECO:0007669"/>
    <property type="project" value="UniProtKB-UniRule"/>
</dbReference>
<dbReference type="HAMAP" id="MF_00330">
    <property type="entry name" value="CbiN"/>
    <property type="match status" value="1"/>
</dbReference>
<dbReference type="InterPro" id="IPR003705">
    <property type="entry name" value="CbiN"/>
</dbReference>
<dbReference type="NCBIfam" id="TIGR01165">
    <property type="entry name" value="cbiN"/>
    <property type="match status" value="1"/>
</dbReference>
<dbReference type="NCBIfam" id="NF002780">
    <property type="entry name" value="PRK02898.1"/>
    <property type="match status" value="1"/>
</dbReference>
<dbReference type="PANTHER" id="PTHR38662">
    <property type="entry name" value="COBALT TRANSPORT PROTEIN CBIN"/>
    <property type="match status" value="1"/>
</dbReference>
<dbReference type="PANTHER" id="PTHR38662:SF1">
    <property type="entry name" value="COBALT TRANSPORT PROTEIN CBIN"/>
    <property type="match status" value="1"/>
</dbReference>
<dbReference type="Pfam" id="PF02553">
    <property type="entry name" value="CbiN"/>
    <property type="match status" value="1"/>
</dbReference>
<name>CBIN_SALPC</name>
<reference key="1">
    <citation type="journal article" date="2009" name="PLoS ONE">
        <title>Salmonella paratyphi C: genetic divergence from Salmonella choleraesuis and pathogenic convergence with Salmonella typhi.</title>
        <authorList>
            <person name="Liu W.-Q."/>
            <person name="Feng Y."/>
            <person name="Wang Y."/>
            <person name="Zou Q.-H."/>
            <person name="Chen F."/>
            <person name="Guo J.-T."/>
            <person name="Peng Y.-H."/>
            <person name="Jin Y."/>
            <person name="Li Y.-G."/>
            <person name="Hu S.-N."/>
            <person name="Johnston R.N."/>
            <person name="Liu G.-R."/>
            <person name="Liu S.-L."/>
        </authorList>
    </citation>
    <scope>NUCLEOTIDE SEQUENCE [LARGE SCALE GENOMIC DNA]</scope>
    <source>
        <strain>RKS4594</strain>
    </source>
</reference>
<gene>
    <name evidence="1" type="primary">cbiN</name>
    <name type="ordered locus">SPC_1693</name>
</gene>
<comment type="function">
    <text evidence="1">Part of the energy-coupling factor (ECF) transporter complex CbiMNOQ involved in cobalt import.</text>
</comment>
<comment type="pathway">
    <text evidence="1">Cofactor biosynthesis; adenosylcobalamin biosynthesis.</text>
</comment>
<comment type="subunit">
    <text evidence="1">Forms an energy-coupling factor (ECF) transporter complex composed of an ATP-binding protein (A component, CbiO), a transmembrane protein (T component, CbiQ) and 2 possible substrate-capture proteins (S components, CbiM and CbiN) of unknown stoichimetry.</text>
</comment>
<comment type="subcellular location">
    <subcellularLocation>
        <location evidence="1">Cell inner membrane</location>
        <topology evidence="1">Multi-pass membrane protein</topology>
    </subcellularLocation>
</comment>
<comment type="similarity">
    <text evidence="1">Belongs to the CbiN family.</text>
</comment>
<proteinExistence type="inferred from homology"/>
<protein>
    <recommendedName>
        <fullName evidence="1">Cobalt transport protein CbiN</fullName>
    </recommendedName>
    <alternativeName>
        <fullName evidence="1">Energy-coupling factor transporter probable substrate-capture protein CbiN</fullName>
        <shortName evidence="1">ECF transporter S component CbiN</shortName>
    </alternativeName>
</protein>
<feature type="chain" id="PRO_1000133109" description="Cobalt transport protein CbiN">
    <location>
        <begin position="1"/>
        <end position="93"/>
    </location>
</feature>
<feature type="transmembrane region" description="Helical" evidence="1">
    <location>
        <begin position="5"/>
        <end position="25"/>
    </location>
</feature>
<feature type="transmembrane region" description="Helical" evidence="1">
    <location>
        <begin position="63"/>
        <end position="83"/>
    </location>
</feature>
<keyword id="KW-0997">Cell inner membrane</keyword>
<keyword id="KW-1003">Cell membrane</keyword>
<keyword id="KW-0169">Cobalamin biosynthesis</keyword>
<keyword id="KW-0170">Cobalt</keyword>
<keyword id="KW-0171">Cobalt transport</keyword>
<keyword id="KW-0406">Ion transport</keyword>
<keyword id="KW-0472">Membrane</keyword>
<keyword id="KW-0812">Transmembrane</keyword>
<keyword id="KW-1133">Transmembrane helix</keyword>
<keyword id="KW-0813">Transport</keyword>
<sequence length="93" mass="10269">MKKTLMLLAMVVALVILPFFINHGGEYGGSDGEAESQIQALAPQYKPWFQPLYEPASGEIESLLFTLQGSLGAAVIFYILGYCKGKQRRDDRA</sequence>
<organism>
    <name type="scientific">Salmonella paratyphi C (strain RKS4594)</name>
    <dbReference type="NCBI Taxonomy" id="476213"/>
    <lineage>
        <taxon>Bacteria</taxon>
        <taxon>Pseudomonadati</taxon>
        <taxon>Pseudomonadota</taxon>
        <taxon>Gammaproteobacteria</taxon>
        <taxon>Enterobacterales</taxon>
        <taxon>Enterobacteriaceae</taxon>
        <taxon>Salmonella</taxon>
    </lineage>
</organism>
<evidence type="ECO:0000255" key="1">
    <source>
        <dbReference type="HAMAP-Rule" id="MF_00330"/>
    </source>
</evidence>